<keyword id="KW-0002">3D-structure</keyword>
<keyword id="KW-0903">Direct protein sequencing</keyword>
<keyword id="KW-1185">Reference proteome</keyword>
<keyword id="KW-0687">Ribonucleoprotein</keyword>
<keyword id="KW-0689">Ribosomal protein</keyword>
<keyword id="KW-0694">RNA-binding</keyword>
<keyword id="KW-0699">rRNA-binding</keyword>
<dbReference type="EMBL" id="X51430">
    <property type="protein sequence ID" value="CAA35793.1"/>
    <property type="molecule type" value="Genomic_DNA"/>
</dbReference>
<dbReference type="EMBL" id="AY596297">
    <property type="protein sequence ID" value="AAV46342.1"/>
    <property type="molecule type" value="Genomic_DNA"/>
</dbReference>
<dbReference type="PIR" id="S08420">
    <property type="entry name" value="R5HS11"/>
</dbReference>
<dbReference type="RefSeq" id="WP_011223608.1">
    <property type="nucleotide sequence ID" value="NC_006396.1"/>
</dbReference>
<dbReference type="PDB" id="1C04">
    <property type="method" value="X-ray"/>
    <property type="resolution" value="5.00 A"/>
    <property type="chains" value="C=79-88"/>
</dbReference>
<dbReference type="PDB" id="1S72">
    <property type="method" value="X-ray"/>
    <property type="resolution" value="2.40 A"/>
    <property type="chains" value="I=1-162"/>
</dbReference>
<dbReference type="PDB" id="1VQ4">
    <property type="method" value="X-ray"/>
    <property type="resolution" value="2.70 A"/>
    <property type="chains" value="I=1-162"/>
</dbReference>
<dbReference type="PDB" id="1VQ5">
    <property type="method" value="X-ray"/>
    <property type="resolution" value="2.60 A"/>
    <property type="chains" value="I=1-162"/>
</dbReference>
<dbReference type="PDB" id="1VQ6">
    <property type="method" value="X-ray"/>
    <property type="resolution" value="2.70 A"/>
    <property type="chains" value="I=1-162"/>
</dbReference>
<dbReference type="PDB" id="1VQ7">
    <property type="method" value="X-ray"/>
    <property type="resolution" value="2.50 A"/>
    <property type="chains" value="I=1-162"/>
</dbReference>
<dbReference type="PDB" id="1VQ8">
    <property type="method" value="X-ray"/>
    <property type="resolution" value="2.20 A"/>
    <property type="chains" value="I=1-162"/>
</dbReference>
<dbReference type="PDB" id="1VQ9">
    <property type="method" value="X-ray"/>
    <property type="resolution" value="2.40 A"/>
    <property type="chains" value="I=1-162"/>
</dbReference>
<dbReference type="PDB" id="1VQK">
    <property type="method" value="X-ray"/>
    <property type="resolution" value="2.30 A"/>
    <property type="chains" value="I=1-162"/>
</dbReference>
<dbReference type="PDB" id="1VQL">
    <property type="method" value="X-ray"/>
    <property type="resolution" value="2.30 A"/>
    <property type="chains" value="I=1-162"/>
</dbReference>
<dbReference type="PDB" id="1VQM">
    <property type="method" value="X-ray"/>
    <property type="resolution" value="2.30 A"/>
    <property type="chains" value="I=1-162"/>
</dbReference>
<dbReference type="PDB" id="1VQN">
    <property type="method" value="X-ray"/>
    <property type="resolution" value="2.40 A"/>
    <property type="chains" value="I=1-162"/>
</dbReference>
<dbReference type="PDB" id="1VQO">
    <property type="method" value="X-ray"/>
    <property type="resolution" value="2.20 A"/>
    <property type="chains" value="I=1-162"/>
</dbReference>
<dbReference type="PDB" id="1VQP">
    <property type="method" value="X-ray"/>
    <property type="resolution" value="2.25 A"/>
    <property type="chains" value="I=1-162"/>
</dbReference>
<dbReference type="PDB" id="1YHQ">
    <property type="method" value="X-ray"/>
    <property type="resolution" value="2.40 A"/>
    <property type="chains" value="I=1-162"/>
</dbReference>
<dbReference type="PDB" id="1YI2">
    <property type="method" value="X-ray"/>
    <property type="resolution" value="2.65 A"/>
    <property type="chains" value="I=1-162"/>
</dbReference>
<dbReference type="PDB" id="1YIJ">
    <property type="method" value="X-ray"/>
    <property type="resolution" value="2.60 A"/>
    <property type="chains" value="I=1-162"/>
</dbReference>
<dbReference type="PDB" id="1YIT">
    <property type="method" value="X-ray"/>
    <property type="resolution" value="2.80 A"/>
    <property type="chains" value="I=1-162"/>
</dbReference>
<dbReference type="PDB" id="1YJ9">
    <property type="method" value="X-ray"/>
    <property type="resolution" value="2.90 A"/>
    <property type="chains" value="I=1-162"/>
</dbReference>
<dbReference type="PDB" id="1YJN">
    <property type="method" value="X-ray"/>
    <property type="resolution" value="3.00 A"/>
    <property type="chains" value="I=1-162"/>
</dbReference>
<dbReference type="PDB" id="1YJW">
    <property type="method" value="X-ray"/>
    <property type="resolution" value="2.90 A"/>
    <property type="chains" value="I=1-162"/>
</dbReference>
<dbReference type="PDB" id="2OTJ">
    <property type="method" value="X-ray"/>
    <property type="resolution" value="2.90 A"/>
    <property type="chains" value="I=2-162"/>
</dbReference>
<dbReference type="PDB" id="2OTL">
    <property type="method" value="X-ray"/>
    <property type="resolution" value="2.70 A"/>
    <property type="chains" value="I=1-162"/>
</dbReference>
<dbReference type="PDB" id="2QA4">
    <property type="method" value="X-ray"/>
    <property type="resolution" value="3.00 A"/>
    <property type="chains" value="I=1-162"/>
</dbReference>
<dbReference type="PDB" id="2QEX">
    <property type="method" value="X-ray"/>
    <property type="resolution" value="2.90 A"/>
    <property type="chains" value="I=1-162"/>
</dbReference>
<dbReference type="PDB" id="3CC2">
    <property type="method" value="X-ray"/>
    <property type="resolution" value="2.40 A"/>
    <property type="chains" value="I=1-162"/>
</dbReference>
<dbReference type="PDB" id="3CC4">
    <property type="method" value="X-ray"/>
    <property type="resolution" value="2.70 A"/>
    <property type="chains" value="I=1-162"/>
</dbReference>
<dbReference type="PDB" id="3CC7">
    <property type="method" value="X-ray"/>
    <property type="resolution" value="2.70 A"/>
    <property type="chains" value="I=1-162"/>
</dbReference>
<dbReference type="PDB" id="3CCE">
    <property type="method" value="X-ray"/>
    <property type="resolution" value="2.75 A"/>
    <property type="chains" value="I=1-162"/>
</dbReference>
<dbReference type="PDB" id="3CCJ">
    <property type="method" value="X-ray"/>
    <property type="resolution" value="2.70 A"/>
    <property type="chains" value="I=1-162"/>
</dbReference>
<dbReference type="PDB" id="3CCL">
    <property type="method" value="X-ray"/>
    <property type="resolution" value="2.90 A"/>
    <property type="chains" value="I=1-162"/>
</dbReference>
<dbReference type="PDB" id="3CCM">
    <property type="method" value="X-ray"/>
    <property type="resolution" value="2.55 A"/>
    <property type="chains" value="I=1-162"/>
</dbReference>
<dbReference type="PDB" id="3CCQ">
    <property type="method" value="X-ray"/>
    <property type="resolution" value="2.90 A"/>
    <property type="chains" value="I=1-162"/>
</dbReference>
<dbReference type="PDB" id="3CCR">
    <property type="method" value="X-ray"/>
    <property type="resolution" value="3.00 A"/>
    <property type="chains" value="I=1-162"/>
</dbReference>
<dbReference type="PDB" id="3CCS">
    <property type="method" value="X-ray"/>
    <property type="resolution" value="2.95 A"/>
    <property type="chains" value="I=1-162"/>
</dbReference>
<dbReference type="PDB" id="3CCU">
    <property type="method" value="X-ray"/>
    <property type="resolution" value="2.80 A"/>
    <property type="chains" value="I=1-162"/>
</dbReference>
<dbReference type="PDB" id="3CCV">
    <property type="method" value="X-ray"/>
    <property type="resolution" value="2.90 A"/>
    <property type="chains" value="I=1-162"/>
</dbReference>
<dbReference type="PDB" id="3CD6">
    <property type="method" value="X-ray"/>
    <property type="resolution" value="2.75 A"/>
    <property type="chains" value="I=1-162"/>
</dbReference>
<dbReference type="PDB" id="3CMA">
    <property type="method" value="X-ray"/>
    <property type="resolution" value="2.80 A"/>
    <property type="chains" value="I=1-162"/>
</dbReference>
<dbReference type="PDB" id="3CME">
    <property type="method" value="X-ray"/>
    <property type="resolution" value="2.95 A"/>
    <property type="chains" value="I=1-162"/>
</dbReference>
<dbReference type="PDB" id="3G4S">
    <property type="method" value="X-ray"/>
    <property type="resolution" value="3.20 A"/>
    <property type="chains" value="I=67-136"/>
</dbReference>
<dbReference type="PDB" id="3G6E">
    <property type="method" value="X-ray"/>
    <property type="resolution" value="2.70 A"/>
    <property type="chains" value="I=67-136"/>
</dbReference>
<dbReference type="PDB" id="3G71">
    <property type="method" value="X-ray"/>
    <property type="resolution" value="2.85 A"/>
    <property type="chains" value="I=67-136"/>
</dbReference>
<dbReference type="PDB" id="3I55">
    <property type="method" value="X-ray"/>
    <property type="resolution" value="3.11 A"/>
    <property type="chains" value="I=1-162"/>
</dbReference>
<dbReference type="PDB" id="3I56">
    <property type="method" value="X-ray"/>
    <property type="resolution" value="2.90 A"/>
    <property type="chains" value="I=1-162"/>
</dbReference>
<dbReference type="PDB" id="4V9F">
    <property type="method" value="X-ray"/>
    <property type="resolution" value="2.40 A"/>
    <property type="chains" value="I=1-162"/>
</dbReference>
<dbReference type="PDBsum" id="1C04"/>
<dbReference type="PDBsum" id="1S72"/>
<dbReference type="PDBsum" id="1VQ4"/>
<dbReference type="PDBsum" id="1VQ5"/>
<dbReference type="PDBsum" id="1VQ6"/>
<dbReference type="PDBsum" id="1VQ7"/>
<dbReference type="PDBsum" id="1VQ8"/>
<dbReference type="PDBsum" id="1VQ9"/>
<dbReference type="PDBsum" id="1VQK"/>
<dbReference type="PDBsum" id="1VQL"/>
<dbReference type="PDBsum" id="1VQM"/>
<dbReference type="PDBsum" id="1VQN"/>
<dbReference type="PDBsum" id="1VQO"/>
<dbReference type="PDBsum" id="1VQP"/>
<dbReference type="PDBsum" id="1YHQ"/>
<dbReference type="PDBsum" id="1YI2"/>
<dbReference type="PDBsum" id="1YIJ"/>
<dbReference type="PDBsum" id="1YIT"/>
<dbReference type="PDBsum" id="1YJ9"/>
<dbReference type="PDBsum" id="1YJN"/>
<dbReference type="PDBsum" id="1YJW"/>
<dbReference type="PDBsum" id="2OTJ"/>
<dbReference type="PDBsum" id="2OTL"/>
<dbReference type="PDBsum" id="2QA4"/>
<dbReference type="PDBsum" id="2QEX"/>
<dbReference type="PDBsum" id="3CC2"/>
<dbReference type="PDBsum" id="3CC4"/>
<dbReference type="PDBsum" id="3CC7"/>
<dbReference type="PDBsum" id="3CCE"/>
<dbReference type="PDBsum" id="3CCJ"/>
<dbReference type="PDBsum" id="3CCL"/>
<dbReference type="PDBsum" id="3CCM"/>
<dbReference type="PDBsum" id="3CCQ"/>
<dbReference type="PDBsum" id="3CCR"/>
<dbReference type="PDBsum" id="3CCS"/>
<dbReference type="PDBsum" id="3CCU"/>
<dbReference type="PDBsum" id="3CCV"/>
<dbReference type="PDBsum" id="3CD6"/>
<dbReference type="PDBsum" id="3CMA"/>
<dbReference type="PDBsum" id="3CME"/>
<dbReference type="PDBsum" id="3G4S"/>
<dbReference type="PDBsum" id="3G6E"/>
<dbReference type="PDBsum" id="3G71"/>
<dbReference type="PDBsum" id="3I55"/>
<dbReference type="PDBsum" id="3I56"/>
<dbReference type="PDBsum" id="4V9F"/>
<dbReference type="SMR" id="P14122"/>
<dbReference type="IntAct" id="P14122">
    <property type="interactions" value="1"/>
</dbReference>
<dbReference type="STRING" id="272569.rrnAC1414"/>
<dbReference type="PaxDb" id="272569-rrnAC1414"/>
<dbReference type="EnsemblBacteria" id="AAV46342">
    <property type="protein sequence ID" value="AAV46342"/>
    <property type="gene ID" value="rrnAC1414"/>
</dbReference>
<dbReference type="GeneID" id="40152382"/>
<dbReference type="KEGG" id="hma:rrnAC1414"/>
<dbReference type="PATRIC" id="fig|272569.17.peg.2109"/>
<dbReference type="eggNOG" id="arCOG04372">
    <property type="taxonomic scope" value="Archaea"/>
</dbReference>
<dbReference type="HOGENOM" id="CLU_074237_4_0_2"/>
<dbReference type="EvolutionaryTrace" id="P14122"/>
<dbReference type="Proteomes" id="UP000001169">
    <property type="component" value="Chromosome I"/>
</dbReference>
<dbReference type="GO" id="GO:0015934">
    <property type="term" value="C:large ribosomal subunit"/>
    <property type="evidence" value="ECO:0007669"/>
    <property type="project" value="TreeGrafter"/>
</dbReference>
<dbReference type="GO" id="GO:0070180">
    <property type="term" value="F:large ribosomal subunit rRNA binding"/>
    <property type="evidence" value="ECO:0007669"/>
    <property type="project" value="UniProtKB-UniRule"/>
</dbReference>
<dbReference type="GO" id="GO:0003735">
    <property type="term" value="F:structural constituent of ribosome"/>
    <property type="evidence" value="ECO:0007669"/>
    <property type="project" value="InterPro"/>
</dbReference>
<dbReference type="GO" id="GO:0006412">
    <property type="term" value="P:translation"/>
    <property type="evidence" value="ECO:0007669"/>
    <property type="project" value="UniProtKB-UniRule"/>
</dbReference>
<dbReference type="CDD" id="cd00349">
    <property type="entry name" value="Ribosomal_L11"/>
    <property type="match status" value="1"/>
</dbReference>
<dbReference type="FunFam" id="1.10.10.250:FF:000006">
    <property type="entry name" value="50S ribosomal protein L11"/>
    <property type="match status" value="1"/>
</dbReference>
<dbReference type="Gene3D" id="1.10.10.250">
    <property type="entry name" value="Ribosomal protein L11, C-terminal domain"/>
    <property type="match status" value="1"/>
</dbReference>
<dbReference type="Gene3D" id="3.30.1550.10">
    <property type="entry name" value="Ribosomal protein L11/L12, N-terminal domain"/>
    <property type="match status" value="1"/>
</dbReference>
<dbReference type="HAMAP" id="MF_00736">
    <property type="entry name" value="Ribosomal_uL11"/>
    <property type="match status" value="1"/>
</dbReference>
<dbReference type="InterPro" id="IPR000911">
    <property type="entry name" value="Ribosomal_uL11"/>
</dbReference>
<dbReference type="InterPro" id="IPR020783">
    <property type="entry name" value="Ribosomal_uL11_C"/>
</dbReference>
<dbReference type="InterPro" id="IPR036769">
    <property type="entry name" value="Ribosomal_uL11_C_sf"/>
</dbReference>
<dbReference type="InterPro" id="IPR020785">
    <property type="entry name" value="Ribosomal_uL11_CS"/>
</dbReference>
<dbReference type="InterPro" id="IPR020784">
    <property type="entry name" value="Ribosomal_uL11_N"/>
</dbReference>
<dbReference type="InterPro" id="IPR036796">
    <property type="entry name" value="Ribosomal_uL11_N_sf"/>
</dbReference>
<dbReference type="NCBIfam" id="NF002232">
    <property type="entry name" value="PRK01143.1"/>
    <property type="match status" value="1"/>
</dbReference>
<dbReference type="PANTHER" id="PTHR11661">
    <property type="entry name" value="60S RIBOSOMAL PROTEIN L12"/>
    <property type="match status" value="1"/>
</dbReference>
<dbReference type="PANTHER" id="PTHR11661:SF1">
    <property type="entry name" value="LARGE RIBOSOMAL SUBUNIT PROTEIN UL11M"/>
    <property type="match status" value="1"/>
</dbReference>
<dbReference type="Pfam" id="PF00298">
    <property type="entry name" value="Ribosomal_L11"/>
    <property type="match status" value="1"/>
</dbReference>
<dbReference type="Pfam" id="PF03946">
    <property type="entry name" value="Ribosomal_L11_N"/>
    <property type="match status" value="1"/>
</dbReference>
<dbReference type="SMART" id="SM00649">
    <property type="entry name" value="RL11"/>
    <property type="match status" value="1"/>
</dbReference>
<dbReference type="SUPFAM" id="SSF54747">
    <property type="entry name" value="Ribosomal L11/L12e N-terminal domain"/>
    <property type="match status" value="1"/>
</dbReference>
<dbReference type="SUPFAM" id="SSF46906">
    <property type="entry name" value="Ribosomal protein L11, C-terminal domain"/>
    <property type="match status" value="1"/>
</dbReference>
<dbReference type="PROSITE" id="PS00359">
    <property type="entry name" value="RIBOSOMAL_L11"/>
    <property type="match status" value="1"/>
</dbReference>
<sequence length="162" mass="17089">MAGTIEVLVPGGEANPGPPLGPELGPTPVDVQAVVQEINDQTAAFDGTEVPVTVKYDDDGSFEIEVGVPPTAELIKDEAGFETGSGEPQEDFVADLSVDQVKQIAEQKHPDLLSYDLTNAAKEVVGTCTSLGVTIEGENPREFKERIDAGEYDDVFAAEAQA</sequence>
<evidence type="ECO:0000255" key="1">
    <source>
        <dbReference type="HAMAP-Rule" id="MF_00736"/>
    </source>
</evidence>
<evidence type="ECO:0000256" key="2">
    <source>
        <dbReference type="SAM" id="MobiDB-lite"/>
    </source>
</evidence>
<evidence type="ECO:0000269" key="3">
    <source>
    </source>
</evidence>
<evidence type="ECO:0000305" key="4"/>
<evidence type="ECO:0007829" key="5">
    <source>
        <dbReference type="PDB" id="1VQ8"/>
    </source>
</evidence>
<evidence type="ECO:0007829" key="6">
    <source>
        <dbReference type="PDB" id="2QA4"/>
    </source>
</evidence>
<accession>P14122</accession>
<accession>Q5V2B0</accession>
<comment type="function">
    <text>Forms part of the ribosomal stalk which helps the ribosome interact with GTP-bound translation factors.</text>
</comment>
<comment type="subunit">
    <text evidence="4">Part of the 50S ribosomal subunit. Forms part of the ribosomal stalk which helps the ribosome interact with GTP-bound translation factors. Forms a heptameric L10(L12)2(L12)2(L12)2 complex, where L10 forms an elongated spine to which 3 L12 dimers bind in a sequential fashion (Probable).</text>
</comment>
<comment type="similarity">
    <text evidence="1">Belongs to the universal ribosomal protein uL11 family.</text>
</comment>
<reference key="1">
    <citation type="journal article" date="1990" name="Nucleic Acids Res.">
        <title>Nucleotide sequence of the genes encoding the L11, L1, L10 and L12 equivalent ribosomal proteins from the archaebacterium Halobacterium marismortui.</title>
        <authorList>
            <person name="Arndt E."/>
            <person name="Weigel C."/>
        </authorList>
    </citation>
    <scope>NUCLEOTIDE SEQUENCE [GENOMIC DNA]</scope>
</reference>
<reference key="2">
    <citation type="journal article" date="2004" name="Genome Res.">
        <title>Genome sequence of Haloarcula marismortui: a halophilic archaeon from the Dead Sea.</title>
        <authorList>
            <person name="Baliga N.S."/>
            <person name="Bonneau R."/>
            <person name="Facciotti M.T."/>
            <person name="Pan M."/>
            <person name="Glusman G."/>
            <person name="Deutsch E.W."/>
            <person name="Shannon P."/>
            <person name="Chiu Y."/>
            <person name="Weng R.S."/>
            <person name="Gan R.R."/>
            <person name="Hung P."/>
            <person name="Date S.V."/>
            <person name="Marcotte E."/>
            <person name="Hood L."/>
            <person name="Ng W.V."/>
        </authorList>
    </citation>
    <scope>NUCLEOTIDE SEQUENCE [LARGE SCALE GENOMIC DNA]</scope>
    <source>
        <strain>ATCC 43049 / DSM 3752 / JCM 8966 / VKM B-1809</strain>
    </source>
</reference>
<reference key="3">
    <citation type="journal article" date="1988" name="Biochemistry">
        <title>Extended N-terminal sequencing of proteins of archaebacterial ribosomes blotted from two-dimensional gels onto glass fiber and poly(vinylidene difluoride) membrane.</title>
        <authorList>
            <person name="Walsh M.J."/>
            <person name="McDougall J."/>
            <person name="Wittmann-Liebold B."/>
        </authorList>
    </citation>
    <scope>PROTEIN SEQUENCE OF 2-28</scope>
</reference>
<reference key="4">
    <citation type="journal article" date="1999" name="Nature">
        <title>Placement of protein and RNA structures into a 5 A-resolution map of the 50S ribosomal subunit.</title>
        <authorList>
            <person name="Ban N."/>
            <person name="Nissen P."/>
            <person name="Hansen J."/>
            <person name="Capel M."/>
            <person name="Moore P.B."/>
            <person name="Steitz T.A."/>
        </authorList>
    </citation>
    <scope>3D-STRUCTURE MODELING</scope>
</reference>
<reference key="5">
    <citation type="journal article" date="2007" name="J. Mol. Biol.">
        <title>Structure of the base of the L7/L12 stalk of the Haloarcula marismortui large ribosomal subunit: analysis of L11 movements.</title>
        <authorList>
            <person name="Kavran J.M."/>
            <person name="Steitz T.A."/>
        </authorList>
    </citation>
    <scope>X-RAY CRYSTALLOGRAPHY (3.0 ANGSTROMS)</scope>
    <scope>RRNA-BINDING</scope>
    <scope>INTERACTION WITH L10</scope>
</reference>
<reference key="6">
    <citation type="journal article" date="2013" name="Acta Crystallogr. D">
        <title>Revisiting the Haloarcula marismortui 50S ribosomal subunit model.</title>
        <authorList>
            <person name="Gabdulkhakov A."/>
            <person name="Nikonov S."/>
            <person name="Garber M."/>
        </authorList>
    </citation>
    <scope>X-RAY CRYSTALLOGRAPHY (2.4 ANGSTROMS) OF THE 50S SUBUNIT</scope>
</reference>
<organism>
    <name type="scientific">Haloarcula marismortui (strain ATCC 43049 / DSM 3752 / JCM 8966 / VKM B-1809)</name>
    <name type="common">Halobacterium marismortui</name>
    <dbReference type="NCBI Taxonomy" id="272569"/>
    <lineage>
        <taxon>Archaea</taxon>
        <taxon>Methanobacteriati</taxon>
        <taxon>Methanobacteriota</taxon>
        <taxon>Stenosarchaea group</taxon>
        <taxon>Halobacteria</taxon>
        <taxon>Halobacteriales</taxon>
        <taxon>Haloarculaceae</taxon>
        <taxon>Haloarcula</taxon>
    </lineage>
</organism>
<protein>
    <recommendedName>
        <fullName evidence="1">Large ribosomal subunit protein uL11</fullName>
    </recommendedName>
    <alternativeName>
        <fullName evidence="4">50S ribosomal protein L11</fullName>
    </alternativeName>
    <alternativeName>
        <fullName>Hmal11</fullName>
    </alternativeName>
</protein>
<gene>
    <name evidence="1" type="primary">rpl11</name>
    <name type="ordered locus">rrnAC1414</name>
</gene>
<name>RL11_HALMA</name>
<proteinExistence type="evidence at protein level"/>
<feature type="initiator methionine" description="Removed" evidence="3">
    <location>
        <position position="1"/>
    </location>
</feature>
<feature type="chain" id="PRO_0000104431" description="Large ribosomal subunit protein uL11">
    <location>
        <begin position="2"/>
        <end position="162"/>
    </location>
</feature>
<feature type="region of interest" description="Disordered" evidence="2">
    <location>
        <begin position="1"/>
        <end position="27"/>
    </location>
</feature>
<feature type="turn" evidence="6">
    <location>
        <begin position="17"/>
        <end position="20"/>
    </location>
</feature>
<feature type="strand" evidence="6">
    <location>
        <begin position="31"/>
        <end position="34"/>
    </location>
</feature>
<feature type="helix" evidence="6">
    <location>
        <begin position="35"/>
        <end position="41"/>
    </location>
</feature>
<feature type="strand" evidence="6">
    <location>
        <begin position="50"/>
        <end position="56"/>
    </location>
</feature>
<feature type="strand" evidence="6">
    <location>
        <begin position="58"/>
        <end position="60"/>
    </location>
</feature>
<feature type="strand" evidence="6">
    <location>
        <begin position="62"/>
        <end position="66"/>
    </location>
</feature>
<feature type="helix" evidence="5">
    <location>
        <begin position="71"/>
        <end position="77"/>
    </location>
</feature>
<feature type="turn" evidence="5">
    <location>
        <begin position="88"/>
        <end position="90"/>
    </location>
</feature>
<feature type="strand" evidence="5">
    <location>
        <begin position="94"/>
        <end position="97"/>
    </location>
</feature>
<feature type="helix" evidence="5">
    <location>
        <begin position="98"/>
        <end position="107"/>
    </location>
</feature>
<feature type="turn" evidence="5">
    <location>
        <begin position="108"/>
        <end position="111"/>
    </location>
</feature>
<feature type="helix" evidence="5">
    <location>
        <begin position="117"/>
        <end position="127"/>
    </location>
</feature>
<feature type="turn" evidence="5">
    <location>
        <begin position="128"/>
        <end position="132"/>
    </location>
</feature>
<feature type="strand" evidence="5">
    <location>
        <begin position="133"/>
        <end position="136"/>
    </location>
</feature>